<organism>
    <name type="scientific">Mycoplasmopsis fermentans (strain ATCC 19989 / NBRC 14854 / NCTC 10117 / PG18)</name>
    <name type="common">Mycoplasma fermentans</name>
    <dbReference type="NCBI Taxonomy" id="496833"/>
    <lineage>
        <taxon>Bacteria</taxon>
        <taxon>Bacillati</taxon>
        <taxon>Mycoplasmatota</taxon>
        <taxon>Mycoplasmoidales</taxon>
        <taxon>Metamycoplasmataceae</taxon>
        <taxon>Mycoplasmopsis</taxon>
    </lineage>
</organism>
<keyword id="KW-0030">Aminoacyl-tRNA synthetase</keyword>
<keyword id="KW-0067">ATP-binding</keyword>
<keyword id="KW-0963">Cytoplasm</keyword>
<keyword id="KW-0436">Ligase</keyword>
<keyword id="KW-0460">Magnesium</keyword>
<keyword id="KW-0479">Metal-binding</keyword>
<keyword id="KW-0547">Nucleotide-binding</keyword>
<keyword id="KW-0648">Protein biosynthesis</keyword>
<keyword id="KW-1185">Reference proteome</keyword>
<accession>Q49158</accession>
<accession>C4XFK3</accession>
<reference key="1">
    <citation type="journal article" date="1996" name="Infect. Immun.">
        <title>Antigenic topology of the P29 surface lipoprotein of Mycoplasma fermentans: differential display of epitopes results in high-frequency phase variation.</title>
        <authorList>
            <person name="Theiss P."/>
            <person name="Karpas A."/>
            <person name="Wise K."/>
        </authorList>
    </citation>
    <scope>NUCLEOTIDE SEQUENCE [GENOMIC DNA]</scope>
    <source>
        <strain>ATCC 19989 / NBRC 14854 / NCTC 10117 / PG18</strain>
    </source>
</reference>
<reference key="2">
    <citation type="journal article" date="2009" name="Curr. Microbiol.">
        <title>Molecular cloning and expression of a novel cholinephosphotransferase involved in glycoglycerophospholipid biosynthesis of Mycoplasma fermentans.</title>
        <authorList>
            <person name="Ishida N."/>
            <person name="Irikura D."/>
            <person name="Matsuda K."/>
            <person name="Sato S."/>
            <person name="Sone T."/>
            <person name="Tanaka M."/>
            <person name="Asano K."/>
        </authorList>
    </citation>
    <scope>NUCLEOTIDE SEQUENCE [LARGE SCALE GENOMIC DNA]</scope>
    <source>
        <strain>ATCC 19989 / NBRC 14854 / NCTC 10117 / PG18</strain>
    </source>
</reference>
<sequence length="488" mass="56701">MTKYTEQEQIRRDKLEFYKKFDVVPFKKAYGLGKLSTSDELNKKYGQFAREELEAKKVKKNISGRLITARGPFLVLKDRKGTIQVYFNKKENPELTKIVETFDLGDILWVRGLLMKTHTGEMTVRAQDIQLLTKALKPLPDKFHGLTDTEERYRHRYLDLITNPESRNTFIMRTKIVQWIRDYFNKLDYLEAETPFLHDYLSGAAAKPFTTHHNSLNQDFVLRIATEIPLKKLVVGGFERVYEMGRIFRNEGYDTTHNPEFTTIEFYEAYSNVEGMMNRTETLIKELCKKIGKSKFVTNGVEVDLSKPFKRVNMIDEVSKKTGKNFRKITLEEAIEVAKAYKIKIEKFFTIGHIINALYEELVEPTLIQPTFLYGHPIEISPLSAKSDDPRFTERAELFINTKEYANMYTELSDPIDQLERFESQLEEKNKGNDEASDIDYDFVDALEYGMPPTGGCGIGIDRLVMLLTETDSIRDVLLFPTLKRIKK</sequence>
<feature type="chain" id="PRO_0000152647" description="Lysine--tRNA ligase">
    <location>
        <begin position="1"/>
        <end position="488"/>
    </location>
</feature>
<feature type="binding site" evidence="1">
    <location>
        <position position="397"/>
    </location>
    <ligand>
        <name>Mg(2+)</name>
        <dbReference type="ChEBI" id="CHEBI:18420"/>
        <label>1</label>
    </ligand>
</feature>
<feature type="binding site" evidence="1">
    <location>
        <position position="404"/>
    </location>
    <ligand>
        <name>Mg(2+)</name>
        <dbReference type="ChEBI" id="CHEBI:18420"/>
        <label>1</label>
    </ligand>
</feature>
<feature type="binding site" evidence="1">
    <location>
        <position position="404"/>
    </location>
    <ligand>
        <name>Mg(2+)</name>
        <dbReference type="ChEBI" id="CHEBI:18420"/>
        <label>2</label>
    </ligand>
</feature>
<feature type="sequence conflict" description="In Ref. 1; AAC43988." evidence="2" ref="1">
    <original>T</original>
    <variation>A</variation>
    <location>
        <position position="2"/>
    </location>
</feature>
<feature type="sequence conflict" description="In Ref. 1; AAC43988." evidence="2" ref="1">
    <original>E</original>
    <variation>D</variation>
    <location>
        <position position="8"/>
    </location>
</feature>
<feature type="sequence conflict" description="In Ref. 1; AAC43988." evidence="2" ref="1">
    <original>G</original>
    <variation>C</variation>
    <location>
        <position position="120"/>
    </location>
</feature>
<gene>
    <name type="primary">lysS</name>
    <name type="ordered locus">MBIO_0660</name>
</gene>
<evidence type="ECO:0000250" key="1"/>
<evidence type="ECO:0000305" key="2"/>
<dbReference type="EC" id="6.1.1.6"/>
<dbReference type="EMBL" id="U50826">
    <property type="protein sequence ID" value="AAC43988.1"/>
    <property type="molecule type" value="Genomic_DNA"/>
</dbReference>
<dbReference type="EMBL" id="AP009608">
    <property type="protein sequence ID" value="BAH69925.1"/>
    <property type="status" value="ALT_INIT"/>
    <property type="molecule type" value="Genomic_DNA"/>
</dbReference>
<dbReference type="RefSeq" id="WP_041594239.1">
    <property type="nucleotide sequence ID" value="NC_021002.1"/>
</dbReference>
<dbReference type="SMR" id="Q49158"/>
<dbReference type="KEGG" id="mfp:MBIO_0660"/>
<dbReference type="PATRIC" id="fig|496833.3.peg.252"/>
<dbReference type="eggNOG" id="COG1190">
    <property type="taxonomic scope" value="Bacteria"/>
</dbReference>
<dbReference type="HOGENOM" id="CLU_008255_6_0_14"/>
<dbReference type="Proteomes" id="UP000006810">
    <property type="component" value="Chromosome"/>
</dbReference>
<dbReference type="GO" id="GO:0005829">
    <property type="term" value="C:cytosol"/>
    <property type="evidence" value="ECO:0007669"/>
    <property type="project" value="TreeGrafter"/>
</dbReference>
<dbReference type="GO" id="GO:0005524">
    <property type="term" value="F:ATP binding"/>
    <property type="evidence" value="ECO:0007669"/>
    <property type="project" value="UniProtKB-UniRule"/>
</dbReference>
<dbReference type="GO" id="GO:0004824">
    <property type="term" value="F:lysine-tRNA ligase activity"/>
    <property type="evidence" value="ECO:0007669"/>
    <property type="project" value="UniProtKB-UniRule"/>
</dbReference>
<dbReference type="GO" id="GO:0000287">
    <property type="term" value="F:magnesium ion binding"/>
    <property type="evidence" value="ECO:0007669"/>
    <property type="project" value="UniProtKB-UniRule"/>
</dbReference>
<dbReference type="GO" id="GO:0000049">
    <property type="term" value="F:tRNA binding"/>
    <property type="evidence" value="ECO:0007669"/>
    <property type="project" value="TreeGrafter"/>
</dbReference>
<dbReference type="GO" id="GO:0006430">
    <property type="term" value="P:lysyl-tRNA aminoacylation"/>
    <property type="evidence" value="ECO:0007669"/>
    <property type="project" value="UniProtKB-UniRule"/>
</dbReference>
<dbReference type="CDD" id="cd00775">
    <property type="entry name" value="LysRS_core"/>
    <property type="match status" value="1"/>
</dbReference>
<dbReference type="CDD" id="cd04322">
    <property type="entry name" value="LysRS_N"/>
    <property type="match status" value="1"/>
</dbReference>
<dbReference type="Gene3D" id="3.30.930.10">
    <property type="entry name" value="Bira Bifunctional Protein, Domain 2"/>
    <property type="match status" value="1"/>
</dbReference>
<dbReference type="Gene3D" id="2.40.50.140">
    <property type="entry name" value="Nucleic acid-binding proteins"/>
    <property type="match status" value="1"/>
</dbReference>
<dbReference type="HAMAP" id="MF_00252">
    <property type="entry name" value="Lys_tRNA_synth_class2"/>
    <property type="match status" value="1"/>
</dbReference>
<dbReference type="InterPro" id="IPR004364">
    <property type="entry name" value="Aa-tRNA-synt_II"/>
</dbReference>
<dbReference type="InterPro" id="IPR006195">
    <property type="entry name" value="aa-tRNA-synth_II"/>
</dbReference>
<dbReference type="InterPro" id="IPR045864">
    <property type="entry name" value="aa-tRNA-synth_II/BPL/LPL"/>
</dbReference>
<dbReference type="InterPro" id="IPR002313">
    <property type="entry name" value="Lys-tRNA-ligase_II"/>
</dbReference>
<dbReference type="InterPro" id="IPR044136">
    <property type="entry name" value="Lys-tRNA-ligase_II_N"/>
</dbReference>
<dbReference type="InterPro" id="IPR018149">
    <property type="entry name" value="Lys-tRNA-synth_II_C"/>
</dbReference>
<dbReference type="InterPro" id="IPR012340">
    <property type="entry name" value="NA-bd_OB-fold"/>
</dbReference>
<dbReference type="InterPro" id="IPR004365">
    <property type="entry name" value="NA-bd_OB_tRNA"/>
</dbReference>
<dbReference type="NCBIfam" id="TIGR00499">
    <property type="entry name" value="lysS_bact"/>
    <property type="match status" value="1"/>
</dbReference>
<dbReference type="NCBIfam" id="NF001756">
    <property type="entry name" value="PRK00484.1"/>
    <property type="match status" value="1"/>
</dbReference>
<dbReference type="PANTHER" id="PTHR42918:SF15">
    <property type="entry name" value="LYSINE--TRNA LIGASE, CHLOROPLASTIC_MITOCHONDRIAL"/>
    <property type="match status" value="1"/>
</dbReference>
<dbReference type="PANTHER" id="PTHR42918">
    <property type="entry name" value="LYSYL-TRNA SYNTHETASE"/>
    <property type="match status" value="1"/>
</dbReference>
<dbReference type="Pfam" id="PF00152">
    <property type="entry name" value="tRNA-synt_2"/>
    <property type="match status" value="1"/>
</dbReference>
<dbReference type="Pfam" id="PF01336">
    <property type="entry name" value="tRNA_anti-codon"/>
    <property type="match status" value="1"/>
</dbReference>
<dbReference type="PRINTS" id="PR00982">
    <property type="entry name" value="TRNASYNTHLYS"/>
</dbReference>
<dbReference type="SUPFAM" id="SSF55681">
    <property type="entry name" value="Class II aaRS and biotin synthetases"/>
    <property type="match status" value="1"/>
</dbReference>
<dbReference type="SUPFAM" id="SSF50249">
    <property type="entry name" value="Nucleic acid-binding proteins"/>
    <property type="match status" value="1"/>
</dbReference>
<dbReference type="PROSITE" id="PS50862">
    <property type="entry name" value="AA_TRNA_LIGASE_II"/>
    <property type="match status" value="1"/>
</dbReference>
<protein>
    <recommendedName>
        <fullName>Lysine--tRNA ligase</fullName>
        <ecNumber>6.1.1.6</ecNumber>
    </recommendedName>
    <alternativeName>
        <fullName>Lysyl-tRNA synthetase</fullName>
        <shortName>LysRS</shortName>
    </alternativeName>
</protein>
<proteinExistence type="inferred from homology"/>
<comment type="catalytic activity">
    <reaction>
        <text>tRNA(Lys) + L-lysine + ATP = L-lysyl-tRNA(Lys) + AMP + diphosphate</text>
        <dbReference type="Rhea" id="RHEA:20792"/>
        <dbReference type="Rhea" id="RHEA-COMP:9696"/>
        <dbReference type="Rhea" id="RHEA-COMP:9697"/>
        <dbReference type="ChEBI" id="CHEBI:30616"/>
        <dbReference type="ChEBI" id="CHEBI:32551"/>
        <dbReference type="ChEBI" id="CHEBI:33019"/>
        <dbReference type="ChEBI" id="CHEBI:78442"/>
        <dbReference type="ChEBI" id="CHEBI:78529"/>
        <dbReference type="ChEBI" id="CHEBI:456215"/>
        <dbReference type="EC" id="6.1.1.6"/>
    </reaction>
</comment>
<comment type="cofactor">
    <cofactor evidence="1">
        <name>Mg(2+)</name>
        <dbReference type="ChEBI" id="CHEBI:18420"/>
    </cofactor>
    <text evidence="1">Binds 3 Mg(2+) ions per subunit.</text>
</comment>
<comment type="subunit">
    <text evidence="1">Homodimer.</text>
</comment>
<comment type="subcellular location">
    <subcellularLocation>
        <location evidence="1">Cytoplasm</location>
    </subcellularLocation>
</comment>
<comment type="similarity">
    <text evidence="2">Belongs to the class-II aminoacyl-tRNA synthetase family.</text>
</comment>
<comment type="sequence caution" evidence="2">
    <conflict type="erroneous initiation">
        <sequence resource="EMBL-CDS" id="BAH69925"/>
    </conflict>
    <text>Extended N-terminus.</text>
</comment>
<name>SYK_MYCFP</name>